<comment type="function">
    <text evidence="1">Component of the spindle pole body (SPB) required for the proper execution of spindle pole body (SPB) duplication. Links the central plaque component SPC42 to the inner plaque component SPC110 (By similarity).</text>
</comment>
<comment type="subcellular location">
    <subcellularLocation>
        <location evidence="1">Nucleus</location>
    </subcellularLocation>
    <subcellularLocation>
        <location evidence="1">Cytoplasm</location>
        <location evidence="1">Cytoskeleton</location>
        <location evidence="1">Microtubule organizing center</location>
        <location evidence="1">Spindle pole body</location>
    </subcellularLocation>
</comment>
<comment type="similarity">
    <text evidence="3">Belongs to the SPC29 family.</text>
</comment>
<feature type="chain" id="PRO_0000409185" description="Spindle pole component 29">
    <location>
        <begin position="1"/>
        <end position="293"/>
    </location>
</feature>
<feature type="region of interest" description="Disordered" evidence="2">
    <location>
        <begin position="87"/>
        <end position="165"/>
    </location>
</feature>
<feature type="region of interest" description="Disordered" evidence="2">
    <location>
        <begin position="212"/>
        <end position="238"/>
    </location>
</feature>
<feature type="region of interest" description="Disordered" evidence="2">
    <location>
        <begin position="254"/>
        <end position="276"/>
    </location>
</feature>
<feature type="compositionally biased region" description="Low complexity" evidence="2">
    <location>
        <begin position="116"/>
        <end position="125"/>
    </location>
</feature>
<feature type="compositionally biased region" description="Pro residues" evidence="2">
    <location>
        <begin position="146"/>
        <end position="158"/>
    </location>
</feature>
<feature type="compositionally biased region" description="Polar residues" evidence="2">
    <location>
        <begin position="264"/>
        <end position="276"/>
    </location>
</feature>
<protein>
    <recommendedName>
        <fullName>Spindle pole component 29</fullName>
    </recommendedName>
</protein>
<keyword id="KW-0963">Cytoplasm</keyword>
<keyword id="KW-0206">Cytoskeleton</keyword>
<keyword id="KW-0539">Nucleus</keyword>
<keyword id="KW-1185">Reference proteome</keyword>
<name>SPC29_EREGS</name>
<sequence length="293" mass="32643">MHVIRTVYNDDRESRGHVSKPLRFVTKAAPEHQIKGCYSPQARALGRQGGFQEQMNVSSFLNRPDTDDTLQNIRKEYLNTKRNLHDLLSSSPTRLQQGARGAGEMSGNAPPLHYVGGQAEPPQQGEQDDRLRQQLRDYMSNKSRSMPPPAKYPAPGPGPADGGVQRQLDSQKMMIESLKRELDTQRTINSMLFERLDRLEEEVRYVRHSNRAPANGAPFRSVSSAPSSSHTNGHVGSYASADDTKVLLGWDQPTLAHGGKHAQPPQQHTRTFSNLDDSTARLIQMSAGGKQKW</sequence>
<organism>
    <name type="scientific">Eremothecium gossypii (strain ATCC 10895 / CBS 109.51 / FGSC 9923 / NRRL Y-1056)</name>
    <name type="common">Yeast</name>
    <name type="synonym">Ashbya gossypii</name>
    <dbReference type="NCBI Taxonomy" id="284811"/>
    <lineage>
        <taxon>Eukaryota</taxon>
        <taxon>Fungi</taxon>
        <taxon>Dikarya</taxon>
        <taxon>Ascomycota</taxon>
        <taxon>Saccharomycotina</taxon>
        <taxon>Saccharomycetes</taxon>
        <taxon>Saccharomycetales</taxon>
        <taxon>Saccharomycetaceae</taxon>
        <taxon>Eremothecium</taxon>
    </lineage>
</organism>
<proteinExistence type="inferred from homology"/>
<gene>
    <name type="primary">SPC29</name>
    <name type="ordered locus">ACR157C</name>
</gene>
<dbReference type="EMBL" id="AE016816">
    <property type="protein sequence ID" value="AAS51383.1"/>
    <property type="molecule type" value="Genomic_DNA"/>
</dbReference>
<dbReference type="RefSeq" id="NP_983559.1">
    <property type="nucleotide sequence ID" value="NM_208912.1"/>
</dbReference>
<dbReference type="SMR" id="Q75BW4"/>
<dbReference type="EnsemblFungi" id="AAS51383">
    <property type="protein sequence ID" value="AAS51383"/>
    <property type="gene ID" value="AGOS_ACR157C"/>
</dbReference>
<dbReference type="GeneID" id="4619691"/>
<dbReference type="KEGG" id="ago:AGOS_ACR157C"/>
<dbReference type="eggNOG" id="ENOG502SD8E">
    <property type="taxonomic scope" value="Eukaryota"/>
</dbReference>
<dbReference type="HOGENOM" id="CLU_956372_0_0_1"/>
<dbReference type="InParanoid" id="Q75BW4"/>
<dbReference type="OMA" id="YLRHATN"/>
<dbReference type="OrthoDB" id="4036034at2759"/>
<dbReference type="Proteomes" id="UP000000591">
    <property type="component" value="Chromosome III"/>
</dbReference>
<dbReference type="GO" id="GO:0005823">
    <property type="term" value="C:central plaque of spindle pole body"/>
    <property type="evidence" value="ECO:0007669"/>
    <property type="project" value="InterPro"/>
</dbReference>
<dbReference type="GO" id="GO:0005737">
    <property type="term" value="C:cytoplasm"/>
    <property type="evidence" value="ECO:0007669"/>
    <property type="project" value="UniProtKB-KW"/>
</dbReference>
<dbReference type="GO" id="GO:0005634">
    <property type="term" value="C:nucleus"/>
    <property type="evidence" value="ECO:0007669"/>
    <property type="project" value="UniProtKB-SubCell"/>
</dbReference>
<dbReference type="GO" id="GO:0005200">
    <property type="term" value="F:structural constituent of cytoskeleton"/>
    <property type="evidence" value="ECO:0007669"/>
    <property type="project" value="InterPro"/>
</dbReference>
<dbReference type="GO" id="GO:0030474">
    <property type="term" value="P:spindle pole body duplication"/>
    <property type="evidence" value="ECO:0007669"/>
    <property type="project" value="InterPro"/>
</dbReference>
<dbReference type="InterPro" id="IPR031392">
    <property type="entry name" value="Spc29"/>
</dbReference>
<dbReference type="Pfam" id="PF17082">
    <property type="entry name" value="Spc29"/>
    <property type="match status" value="1"/>
</dbReference>
<reference key="1">
    <citation type="journal article" date="2004" name="Science">
        <title>The Ashbya gossypii genome as a tool for mapping the ancient Saccharomyces cerevisiae genome.</title>
        <authorList>
            <person name="Dietrich F.S."/>
            <person name="Voegeli S."/>
            <person name="Brachat S."/>
            <person name="Lerch A."/>
            <person name="Gates K."/>
            <person name="Steiner S."/>
            <person name="Mohr C."/>
            <person name="Poehlmann R."/>
            <person name="Luedi P."/>
            <person name="Choi S."/>
            <person name="Wing R.A."/>
            <person name="Flavier A."/>
            <person name="Gaffney T.D."/>
            <person name="Philippsen P."/>
        </authorList>
    </citation>
    <scope>NUCLEOTIDE SEQUENCE [LARGE SCALE GENOMIC DNA]</scope>
    <source>
        <strain>ATCC 10895 / CBS 109.51 / FGSC 9923 / NRRL Y-1056</strain>
    </source>
</reference>
<reference key="2">
    <citation type="journal article" date="2013" name="G3 (Bethesda)">
        <title>Genomes of Ashbya fungi isolated from insects reveal four mating-type loci, numerous translocations, lack of transposons, and distinct gene duplications.</title>
        <authorList>
            <person name="Dietrich F.S."/>
            <person name="Voegeli S."/>
            <person name="Kuo S."/>
            <person name="Philippsen P."/>
        </authorList>
    </citation>
    <scope>GENOME REANNOTATION</scope>
    <source>
        <strain>ATCC 10895 / CBS 109.51 / FGSC 9923 / NRRL Y-1056</strain>
    </source>
</reference>
<evidence type="ECO:0000250" key="1"/>
<evidence type="ECO:0000256" key="2">
    <source>
        <dbReference type="SAM" id="MobiDB-lite"/>
    </source>
</evidence>
<evidence type="ECO:0000305" key="3"/>
<accession>Q75BW4</accession>